<organism>
    <name type="scientific">Bacillus subtilis (strain 168)</name>
    <dbReference type="NCBI Taxonomy" id="224308"/>
    <lineage>
        <taxon>Bacteria</taxon>
        <taxon>Bacillati</taxon>
        <taxon>Bacillota</taxon>
        <taxon>Bacilli</taxon>
        <taxon>Bacillales</taxon>
        <taxon>Bacillaceae</taxon>
        <taxon>Bacillus</taxon>
    </lineage>
</organism>
<dbReference type="EC" id="2.4.2.7" evidence="1"/>
<dbReference type="EMBL" id="U86377">
    <property type="protein sequence ID" value="AAC46040.1"/>
    <property type="molecule type" value="Genomic_DNA"/>
</dbReference>
<dbReference type="EMBL" id="AL009126">
    <property type="protein sequence ID" value="CAB14720.1"/>
    <property type="molecule type" value="Genomic_DNA"/>
</dbReference>
<dbReference type="PIR" id="B69587">
    <property type="entry name" value="B69587"/>
</dbReference>
<dbReference type="RefSeq" id="NP_390639.1">
    <property type="nucleotide sequence ID" value="NC_000964.3"/>
</dbReference>
<dbReference type="RefSeq" id="WP_003229745.1">
    <property type="nucleotide sequence ID" value="NZ_OZ025638.1"/>
</dbReference>
<dbReference type="SMR" id="O34443"/>
<dbReference type="FunCoup" id="O34443">
    <property type="interactions" value="512"/>
</dbReference>
<dbReference type="STRING" id="224308.BSU27610"/>
<dbReference type="jPOST" id="O34443"/>
<dbReference type="PaxDb" id="224308-BSU27610"/>
<dbReference type="EnsemblBacteria" id="CAB14720">
    <property type="protein sequence ID" value="CAB14720"/>
    <property type="gene ID" value="BSU_27610"/>
</dbReference>
<dbReference type="GeneID" id="938063"/>
<dbReference type="KEGG" id="bsu:BSU27610"/>
<dbReference type="PATRIC" id="fig|224308.179.peg.3000"/>
<dbReference type="eggNOG" id="COG0503">
    <property type="taxonomic scope" value="Bacteria"/>
</dbReference>
<dbReference type="InParanoid" id="O34443"/>
<dbReference type="OrthoDB" id="9803963at2"/>
<dbReference type="PhylomeDB" id="O34443"/>
<dbReference type="BioCyc" id="BSUB:BSU27610-MONOMER"/>
<dbReference type="UniPathway" id="UPA00588">
    <property type="reaction ID" value="UER00646"/>
</dbReference>
<dbReference type="Proteomes" id="UP000001570">
    <property type="component" value="Chromosome"/>
</dbReference>
<dbReference type="GO" id="GO:0005737">
    <property type="term" value="C:cytoplasm"/>
    <property type="evidence" value="ECO:0007669"/>
    <property type="project" value="UniProtKB-SubCell"/>
</dbReference>
<dbReference type="GO" id="GO:0003999">
    <property type="term" value="F:adenine phosphoribosyltransferase activity"/>
    <property type="evidence" value="ECO:0000318"/>
    <property type="project" value="GO_Central"/>
</dbReference>
<dbReference type="GO" id="GO:0006168">
    <property type="term" value="P:adenine salvage"/>
    <property type="evidence" value="ECO:0007669"/>
    <property type="project" value="InterPro"/>
</dbReference>
<dbReference type="GO" id="GO:0044209">
    <property type="term" value="P:AMP salvage"/>
    <property type="evidence" value="ECO:0007669"/>
    <property type="project" value="UniProtKB-UniRule"/>
</dbReference>
<dbReference type="GO" id="GO:0006166">
    <property type="term" value="P:purine ribonucleoside salvage"/>
    <property type="evidence" value="ECO:0007669"/>
    <property type="project" value="UniProtKB-KW"/>
</dbReference>
<dbReference type="CDD" id="cd06223">
    <property type="entry name" value="PRTases_typeI"/>
    <property type="match status" value="1"/>
</dbReference>
<dbReference type="FunFam" id="3.40.50.2020:FF:000004">
    <property type="entry name" value="Adenine phosphoribosyltransferase"/>
    <property type="match status" value="1"/>
</dbReference>
<dbReference type="Gene3D" id="3.40.50.2020">
    <property type="match status" value="1"/>
</dbReference>
<dbReference type="HAMAP" id="MF_00004">
    <property type="entry name" value="Aden_phosphoribosyltr"/>
    <property type="match status" value="1"/>
</dbReference>
<dbReference type="InterPro" id="IPR005764">
    <property type="entry name" value="Ade_phspho_trans"/>
</dbReference>
<dbReference type="InterPro" id="IPR000836">
    <property type="entry name" value="PRibTrfase_dom"/>
</dbReference>
<dbReference type="InterPro" id="IPR029057">
    <property type="entry name" value="PRTase-like"/>
</dbReference>
<dbReference type="InterPro" id="IPR050054">
    <property type="entry name" value="UPRTase/APRTase"/>
</dbReference>
<dbReference type="NCBIfam" id="TIGR01090">
    <property type="entry name" value="apt"/>
    <property type="match status" value="1"/>
</dbReference>
<dbReference type="NCBIfam" id="NF002633">
    <property type="entry name" value="PRK02304.1-2"/>
    <property type="match status" value="1"/>
</dbReference>
<dbReference type="NCBIfam" id="NF002634">
    <property type="entry name" value="PRK02304.1-3"/>
    <property type="match status" value="1"/>
</dbReference>
<dbReference type="NCBIfam" id="NF002636">
    <property type="entry name" value="PRK02304.1-5"/>
    <property type="match status" value="1"/>
</dbReference>
<dbReference type="PANTHER" id="PTHR32315">
    <property type="entry name" value="ADENINE PHOSPHORIBOSYLTRANSFERASE"/>
    <property type="match status" value="1"/>
</dbReference>
<dbReference type="PANTHER" id="PTHR32315:SF3">
    <property type="entry name" value="ADENINE PHOSPHORIBOSYLTRANSFERASE"/>
    <property type="match status" value="1"/>
</dbReference>
<dbReference type="Pfam" id="PF00156">
    <property type="entry name" value="Pribosyltran"/>
    <property type="match status" value="1"/>
</dbReference>
<dbReference type="SUPFAM" id="SSF53271">
    <property type="entry name" value="PRTase-like"/>
    <property type="match status" value="1"/>
</dbReference>
<evidence type="ECO:0000255" key="1">
    <source>
        <dbReference type="HAMAP-Rule" id="MF_00004"/>
    </source>
</evidence>
<feature type="chain" id="PRO_0000149354" description="Adenine phosphoribosyltransferase">
    <location>
        <begin position="1"/>
        <end position="170"/>
    </location>
</feature>
<accession>O34443</accession>
<sequence>MDLKQYVTIVPDYPKEGVQFKDITTLMDKGDVYRYATDQIVEYAKEKQIDLVVGPEARGFIIGCPVAYALGVGFAPVRKEGKLPREVIKVDYGLEYGKDVLTIHKDAIKPGQRVLITDDLLATGGTIEATIKLVEELGGVVAGIAFLIELSYLDGRNKLEDYDILTLMKY</sequence>
<proteinExistence type="inferred from homology"/>
<name>APT_BACSU</name>
<gene>
    <name evidence="1" type="primary">apt</name>
    <name type="ordered locus">BSU27610</name>
</gene>
<comment type="function">
    <text>Catalyzes a salvage reaction resulting in the formation of AMP, that is energically less costly than de novo synthesis.</text>
</comment>
<comment type="catalytic activity">
    <reaction evidence="1">
        <text>AMP + diphosphate = 5-phospho-alpha-D-ribose 1-diphosphate + adenine</text>
        <dbReference type="Rhea" id="RHEA:16609"/>
        <dbReference type="ChEBI" id="CHEBI:16708"/>
        <dbReference type="ChEBI" id="CHEBI:33019"/>
        <dbReference type="ChEBI" id="CHEBI:58017"/>
        <dbReference type="ChEBI" id="CHEBI:456215"/>
        <dbReference type="EC" id="2.4.2.7"/>
    </reaction>
</comment>
<comment type="pathway">
    <text evidence="1">Purine metabolism; AMP biosynthesis via salvage pathway; AMP from adenine: step 1/1.</text>
</comment>
<comment type="subunit">
    <text evidence="1">Homodimer.</text>
</comment>
<comment type="subcellular location">
    <subcellularLocation>
        <location>Cytoplasm</location>
    </subcellularLocation>
</comment>
<comment type="similarity">
    <text evidence="1">Belongs to the purine/pyrimidine phosphoribosyltransferase family.</text>
</comment>
<reference key="1">
    <citation type="journal article" date="1997" name="Mol. Microbiol.">
        <title>Cloning and characterization of a relA/spoT homologue from Bacillus subtilis.</title>
        <authorList>
            <person name="Wendrich T.M."/>
            <person name="Marahiel M.A."/>
        </authorList>
    </citation>
    <scope>NUCLEOTIDE SEQUENCE [GENOMIC DNA]</scope>
    <source>
        <strain>168 / JH642</strain>
    </source>
</reference>
<reference key="2">
    <citation type="journal article" date="1997" name="Nature">
        <title>The complete genome sequence of the Gram-positive bacterium Bacillus subtilis.</title>
        <authorList>
            <person name="Kunst F."/>
            <person name="Ogasawara N."/>
            <person name="Moszer I."/>
            <person name="Albertini A.M."/>
            <person name="Alloni G."/>
            <person name="Azevedo V."/>
            <person name="Bertero M.G."/>
            <person name="Bessieres P."/>
            <person name="Bolotin A."/>
            <person name="Borchert S."/>
            <person name="Borriss R."/>
            <person name="Boursier L."/>
            <person name="Brans A."/>
            <person name="Braun M."/>
            <person name="Brignell S.C."/>
            <person name="Bron S."/>
            <person name="Brouillet S."/>
            <person name="Bruschi C.V."/>
            <person name="Caldwell B."/>
            <person name="Capuano V."/>
            <person name="Carter N.M."/>
            <person name="Choi S.-K."/>
            <person name="Codani J.-J."/>
            <person name="Connerton I.F."/>
            <person name="Cummings N.J."/>
            <person name="Daniel R.A."/>
            <person name="Denizot F."/>
            <person name="Devine K.M."/>
            <person name="Duesterhoeft A."/>
            <person name="Ehrlich S.D."/>
            <person name="Emmerson P.T."/>
            <person name="Entian K.-D."/>
            <person name="Errington J."/>
            <person name="Fabret C."/>
            <person name="Ferrari E."/>
            <person name="Foulger D."/>
            <person name="Fritz C."/>
            <person name="Fujita M."/>
            <person name="Fujita Y."/>
            <person name="Fuma S."/>
            <person name="Galizzi A."/>
            <person name="Galleron N."/>
            <person name="Ghim S.-Y."/>
            <person name="Glaser P."/>
            <person name="Goffeau A."/>
            <person name="Golightly E.J."/>
            <person name="Grandi G."/>
            <person name="Guiseppi G."/>
            <person name="Guy B.J."/>
            <person name="Haga K."/>
            <person name="Haiech J."/>
            <person name="Harwood C.R."/>
            <person name="Henaut A."/>
            <person name="Hilbert H."/>
            <person name="Holsappel S."/>
            <person name="Hosono S."/>
            <person name="Hullo M.-F."/>
            <person name="Itaya M."/>
            <person name="Jones L.-M."/>
            <person name="Joris B."/>
            <person name="Karamata D."/>
            <person name="Kasahara Y."/>
            <person name="Klaerr-Blanchard M."/>
            <person name="Klein C."/>
            <person name="Kobayashi Y."/>
            <person name="Koetter P."/>
            <person name="Koningstein G."/>
            <person name="Krogh S."/>
            <person name="Kumano M."/>
            <person name="Kurita K."/>
            <person name="Lapidus A."/>
            <person name="Lardinois S."/>
            <person name="Lauber J."/>
            <person name="Lazarevic V."/>
            <person name="Lee S.-M."/>
            <person name="Levine A."/>
            <person name="Liu H."/>
            <person name="Masuda S."/>
            <person name="Mauel C."/>
            <person name="Medigue C."/>
            <person name="Medina N."/>
            <person name="Mellado R.P."/>
            <person name="Mizuno M."/>
            <person name="Moestl D."/>
            <person name="Nakai S."/>
            <person name="Noback M."/>
            <person name="Noone D."/>
            <person name="O'Reilly M."/>
            <person name="Ogawa K."/>
            <person name="Ogiwara A."/>
            <person name="Oudega B."/>
            <person name="Park S.-H."/>
            <person name="Parro V."/>
            <person name="Pohl T.M."/>
            <person name="Portetelle D."/>
            <person name="Porwollik S."/>
            <person name="Prescott A.M."/>
            <person name="Presecan E."/>
            <person name="Pujic P."/>
            <person name="Purnelle B."/>
            <person name="Rapoport G."/>
            <person name="Rey M."/>
            <person name="Reynolds S."/>
            <person name="Rieger M."/>
            <person name="Rivolta C."/>
            <person name="Rocha E."/>
            <person name="Roche B."/>
            <person name="Rose M."/>
            <person name="Sadaie Y."/>
            <person name="Sato T."/>
            <person name="Scanlan E."/>
            <person name="Schleich S."/>
            <person name="Schroeter R."/>
            <person name="Scoffone F."/>
            <person name="Sekiguchi J."/>
            <person name="Sekowska A."/>
            <person name="Seror S.J."/>
            <person name="Serror P."/>
            <person name="Shin B.-S."/>
            <person name="Soldo B."/>
            <person name="Sorokin A."/>
            <person name="Tacconi E."/>
            <person name="Takagi T."/>
            <person name="Takahashi H."/>
            <person name="Takemaru K."/>
            <person name="Takeuchi M."/>
            <person name="Tamakoshi A."/>
            <person name="Tanaka T."/>
            <person name="Terpstra P."/>
            <person name="Tognoni A."/>
            <person name="Tosato V."/>
            <person name="Uchiyama S."/>
            <person name="Vandenbol M."/>
            <person name="Vannier F."/>
            <person name="Vassarotti A."/>
            <person name="Viari A."/>
            <person name="Wambutt R."/>
            <person name="Wedler E."/>
            <person name="Wedler H."/>
            <person name="Weitzenegger T."/>
            <person name="Winters P."/>
            <person name="Wipat A."/>
            <person name="Yamamoto H."/>
            <person name="Yamane K."/>
            <person name="Yasumoto K."/>
            <person name="Yata K."/>
            <person name="Yoshida K."/>
            <person name="Yoshikawa H.-F."/>
            <person name="Zumstein E."/>
            <person name="Yoshikawa H."/>
            <person name="Danchin A."/>
        </authorList>
    </citation>
    <scope>NUCLEOTIDE SEQUENCE [LARGE SCALE GENOMIC DNA]</scope>
    <source>
        <strain>168</strain>
    </source>
</reference>
<keyword id="KW-0963">Cytoplasm</keyword>
<keyword id="KW-0328">Glycosyltransferase</keyword>
<keyword id="KW-0660">Purine salvage</keyword>
<keyword id="KW-1185">Reference proteome</keyword>
<keyword id="KW-0808">Transferase</keyword>
<protein>
    <recommendedName>
        <fullName evidence="1">Adenine phosphoribosyltransferase</fullName>
        <shortName evidence="1">APRT</shortName>
        <ecNumber evidence="1">2.4.2.7</ecNumber>
    </recommendedName>
</protein>